<name>CMOA_YERPG</name>
<feature type="chain" id="PRO_1000201373" description="Carboxy-S-adenosyl-L-methionine synthase">
    <location>
        <begin position="1"/>
        <end position="267"/>
    </location>
</feature>
<feature type="region of interest" description="Disordered" evidence="2">
    <location>
        <begin position="1"/>
        <end position="25"/>
    </location>
</feature>
<feature type="compositionally biased region" description="Polar residues" evidence="2">
    <location>
        <begin position="1"/>
        <end position="11"/>
    </location>
</feature>
<feature type="compositionally biased region" description="Basic and acidic residues" evidence="2">
    <location>
        <begin position="12"/>
        <end position="24"/>
    </location>
</feature>
<feature type="binding site" evidence="1">
    <location>
        <position position="59"/>
    </location>
    <ligand>
        <name>S-adenosyl-L-methionine</name>
        <dbReference type="ChEBI" id="CHEBI:59789"/>
    </ligand>
</feature>
<feature type="binding site" evidence="1">
    <location>
        <begin position="84"/>
        <end position="86"/>
    </location>
    <ligand>
        <name>S-adenosyl-L-methionine</name>
        <dbReference type="ChEBI" id="CHEBI:59789"/>
    </ligand>
</feature>
<feature type="binding site" evidence="1">
    <location>
        <begin position="109"/>
        <end position="110"/>
    </location>
    <ligand>
        <name>S-adenosyl-L-methionine</name>
        <dbReference type="ChEBI" id="CHEBI:59789"/>
    </ligand>
</feature>
<feature type="binding site" evidence="1">
    <location>
        <begin position="137"/>
        <end position="138"/>
    </location>
    <ligand>
        <name>S-adenosyl-L-methionine</name>
        <dbReference type="ChEBI" id="CHEBI:59789"/>
    </ligand>
</feature>
<feature type="binding site" evidence="1">
    <location>
        <position position="152"/>
    </location>
    <ligand>
        <name>S-adenosyl-L-methionine</name>
        <dbReference type="ChEBI" id="CHEBI:59789"/>
    </ligand>
</feature>
<feature type="binding site" evidence="1">
    <location>
        <position position="219"/>
    </location>
    <ligand>
        <name>S-adenosyl-L-methionine</name>
        <dbReference type="ChEBI" id="CHEBI:59789"/>
    </ligand>
</feature>
<sequence length="267" mass="30040">MPNRDTQSQNDTPRHSPEAAEPQRDSLFAAPIAKLGDWTFDEKVAEVFPDMIQRSVPGYSNIISMIGMLAERFVQPNSQIYDLGCSLGAATLSMRRNIKAEGCKIIAVDNSPAMVERCRRHIDAFRAETPVDVVEADILDIKLENASMVVLNFTLQFLEPANRQRLLNQVYQGLRPGGALVLSEKFSFADHNVGELLFNMHHDFKRANGYSELEISQKRSMLENVMLTDSVETHKNRLHQAGFEHAEVWFQCFNFGSLIALKAGEAQ</sequence>
<evidence type="ECO:0000255" key="1">
    <source>
        <dbReference type="HAMAP-Rule" id="MF_01589"/>
    </source>
</evidence>
<evidence type="ECO:0000256" key="2">
    <source>
        <dbReference type="SAM" id="MobiDB-lite"/>
    </source>
</evidence>
<comment type="function">
    <text evidence="1">Catalyzes the conversion of S-adenosyl-L-methionine (SAM) to carboxy-S-adenosyl-L-methionine (Cx-SAM).</text>
</comment>
<comment type="catalytic activity">
    <reaction evidence="1">
        <text>prephenate + S-adenosyl-L-methionine = carboxy-S-adenosyl-L-methionine + 3-phenylpyruvate + H2O</text>
        <dbReference type="Rhea" id="RHEA:51692"/>
        <dbReference type="ChEBI" id="CHEBI:15377"/>
        <dbReference type="ChEBI" id="CHEBI:18005"/>
        <dbReference type="ChEBI" id="CHEBI:29934"/>
        <dbReference type="ChEBI" id="CHEBI:59789"/>
        <dbReference type="ChEBI" id="CHEBI:134278"/>
    </reaction>
</comment>
<comment type="subunit">
    <text evidence="1">Homodimer.</text>
</comment>
<comment type="similarity">
    <text evidence="1">Belongs to the class I-like SAM-binding methyltransferase superfamily. Cx-SAM synthase family.</text>
</comment>
<organism>
    <name type="scientific">Yersinia pestis bv. Antiqua (strain Angola)</name>
    <dbReference type="NCBI Taxonomy" id="349746"/>
    <lineage>
        <taxon>Bacteria</taxon>
        <taxon>Pseudomonadati</taxon>
        <taxon>Pseudomonadota</taxon>
        <taxon>Gammaproteobacteria</taxon>
        <taxon>Enterobacterales</taxon>
        <taxon>Yersiniaceae</taxon>
        <taxon>Yersinia</taxon>
    </lineage>
</organism>
<reference key="1">
    <citation type="journal article" date="2010" name="J. Bacteriol.">
        <title>Genome sequence of the deep-rooted Yersinia pestis strain Angola reveals new insights into the evolution and pangenome of the plague bacterium.</title>
        <authorList>
            <person name="Eppinger M."/>
            <person name="Worsham P.L."/>
            <person name="Nikolich M.P."/>
            <person name="Riley D.R."/>
            <person name="Sebastian Y."/>
            <person name="Mou S."/>
            <person name="Achtman M."/>
            <person name="Lindler L.E."/>
            <person name="Ravel J."/>
        </authorList>
    </citation>
    <scope>NUCLEOTIDE SEQUENCE [LARGE SCALE GENOMIC DNA]</scope>
    <source>
        <strain>Angola</strain>
    </source>
</reference>
<accession>A9QYY1</accession>
<dbReference type="EC" id="2.1.3.-" evidence="1"/>
<dbReference type="EMBL" id="CP000901">
    <property type="protein sequence ID" value="ABX86577.1"/>
    <property type="molecule type" value="Genomic_DNA"/>
</dbReference>
<dbReference type="RefSeq" id="WP_002211207.1">
    <property type="nucleotide sequence ID" value="NZ_CP009935.1"/>
</dbReference>
<dbReference type="SMR" id="A9QYY1"/>
<dbReference type="GeneID" id="57976611"/>
<dbReference type="KEGG" id="ypg:YpAngola_A2429"/>
<dbReference type="PATRIC" id="fig|349746.12.peg.3446"/>
<dbReference type="GO" id="GO:0016743">
    <property type="term" value="F:carboxyl- or carbamoyltransferase activity"/>
    <property type="evidence" value="ECO:0007669"/>
    <property type="project" value="UniProtKB-UniRule"/>
</dbReference>
<dbReference type="GO" id="GO:1904047">
    <property type="term" value="F:S-adenosyl-L-methionine binding"/>
    <property type="evidence" value="ECO:0007669"/>
    <property type="project" value="UniProtKB-UniRule"/>
</dbReference>
<dbReference type="GO" id="GO:0002098">
    <property type="term" value="P:tRNA wobble uridine modification"/>
    <property type="evidence" value="ECO:0007669"/>
    <property type="project" value="InterPro"/>
</dbReference>
<dbReference type="CDD" id="cd02440">
    <property type="entry name" value="AdoMet_MTases"/>
    <property type="match status" value="1"/>
</dbReference>
<dbReference type="Gene3D" id="3.40.50.150">
    <property type="entry name" value="Vaccinia Virus protein VP39"/>
    <property type="match status" value="1"/>
</dbReference>
<dbReference type="HAMAP" id="MF_01589">
    <property type="entry name" value="Cx_SAM_synthase"/>
    <property type="match status" value="1"/>
</dbReference>
<dbReference type="InterPro" id="IPR005271">
    <property type="entry name" value="CmoA"/>
</dbReference>
<dbReference type="InterPro" id="IPR041698">
    <property type="entry name" value="Methyltransf_25"/>
</dbReference>
<dbReference type="InterPro" id="IPR029063">
    <property type="entry name" value="SAM-dependent_MTases_sf"/>
</dbReference>
<dbReference type="NCBIfam" id="TIGR00740">
    <property type="entry name" value="carboxy-S-adenosyl-L-methionine synthase CmoA"/>
    <property type="match status" value="1"/>
</dbReference>
<dbReference type="NCBIfam" id="NF011995">
    <property type="entry name" value="PRK15451.1"/>
    <property type="match status" value="1"/>
</dbReference>
<dbReference type="PANTHER" id="PTHR43861:SF2">
    <property type="entry name" value="CARBOXY-S-ADENOSYL-L-METHIONINE SYNTHASE"/>
    <property type="match status" value="1"/>
</dbReference>
<dbReference type="PANTHER" id="PTHR43861">
    <property type="entry name" value="TRANS-ACONITATE 2-METHYLTRANSFERASE-RELATED"/>
    <property type="match status" value="1"/>
</dbReference>
<dbReference type="Pfam" id="PF13649">
    <property type="entry name" value="Methyltransf_25"/>
    <property type="match status" value="1"/>
</dbReference>
<dbReference type="PIRSF" id="PIRSF006325">
    <property type="entry name" value="MeTrfase_bac"/>
    <property type="match status" value="1"/>
</dbReference>
<dbReference type="SUPFAM" id="SSF53335">
    <property type="entry name" value="S-adenosyl-L-methionine-dependent methyltransferases"/>
    <property type="match status" value="1"/>
</dbReference>
<gene>
    <name evidence="1" type="primary">cmoA</name>
    <name type="ordered locus">YpAngola_A2429</name>
</gene>
<keyword id="KW-0949">S-adenosyl-L-methionine</keyword>
<keyword id="KW-0808">Transferase</keyword>
<proteinExistence type="inferred from homology"/>
<protein>
    <recommendedName>
        <fullName evidence="1">Carboxy-S-adenosyl-L-methionine synthase</fullName>
        <shortName evidence="1">Cx-SAM synthase</shortName>
        <ecNumber evidence="1">2.1.3.-</ecNumber>
    </recommendedName>
</protein>